<sequence>MAGPSGAAPKKQASLLGFFTPKTVNGLKRPTSSRPGTSEEDEERTADSSPSSRDNVRKRPLEQDPDAGNTRRPRASKRAKNVVIDDEDDEHDNDDDDDDFKLDAEAEADPEPVVAADDTAGVSQSSSISASRAGRYIYDESQPKGQAKTDENGDALDAATLRKKRELHDKFVKKLGHPDAMSRWGNAGRGEQETGAQEEEEDGDAAEEEPPPPPKGKKKGAKSGKLTPMELQFLEIKRKHMDTVLIVEVGYKFRFFGEDARIAGKELSIVCIPGKFRYDEHPSEAHLDRFASASIPVHRLPVHAKRLVAAGHKVGVVRQIETAALKKAGDNRNAPFVRKLCEVYTKGTYIDEMGEMDAQTGASGAHSGGYLLCLTETAAKGSGTDEKVDVGLVAVQPATGDIIYDSFEDGFMRSEIETRLLHISPCELLIVGQLSKATEKLVKHLSGSASNVFGDRTRVERVAKGKTTPAEASSHVTKFYAGKLKGSTQDDRAAALLDKVLNLPEPVTLCLSAMITHLTEFGLEHIFDLTKYFQSFSTRSHMCINGTTLESLEVYRNSTDHTEKGSLLWALDKTRTRFGQRMLRKWLGRPLLDKERLDDRVAAVEELFENRNGPQVEKLQKLLSSIKTDLERSLIRIFYGRCTRPELLAVLQTLQRIAVEYIVVKEPSQTGFKSNLVSEALASLPRIREIVVSYLNRINPDAARKNDKYEFFRDESDDTGDDGEDEITTQKMSIAAVEQELDAHRSDAAATLGRKKAVDYVTVAGIEYLIEVPNTEIRKVPASWAKISGTKKLSRFHTPEVVRLIAERDQHKEALAAACDAAFKAMLASIADQYQPLRDAVSSLATLDCLLSFAQVAALPGYSKPIILPDSHPPTIAVAGGRHPIAEHTLPSGYIPFSTTLSSPAPLAHLVTGPNMGGKSSFVRALALLVLLAQVGSFVPADSLRLTLSDAIYTRMGASDNLFAGESTFMVEVGETAAILRTATPRSLVLLDELGRGTSTHDGAAIAHAVLDHVVRNTRCLTLFITHYQSLARVAEGLGTGLVRNVHMRFTSSRDDNDDGDKDQDDDVGENITFLYEVADGVAHRSYGLNVARLARIPRKILEVAARKSRKMEEDVRTRRLRSATKLLEAVCRGDGSDDQLEHLLSSIEQL</sequence>
<keyword id="KW-0067">ATP-binding</keyword>
<keyword id="KW-0227">DNA damage</keyword>
<keyword id="KW-0234">DNA repair</keyword>
<keyword id="KW-0238">DNA-binding</keyword>
<keyword id="KW-0547">Nucleotide-binding</keyword>
<keyword id="KW-0539">Nucleus</keyword>
<keyword id="KW-1185">Reference proteome</keyword>
<organism>
    <name type="scientific">Pyricularia oryzae (strain 70-15 / ATCC MYA-4617 / FGSC 8958)</name>
    <name type="common">Rice blast fungus</name>
    <name type="synonym">Magnaporthe oryzae</name>
    <dbReference type="NCBI Taxonomy" id="242507"/>
    <lineage>
        <taxon>Eukaryota</taxon>
        <taxon>Fungi</taxon>
        <taxon>Dikarya</taxon>
        <taxon>Ascomycota</taxon>
        <taxon>Pezizomycotina</taxon>
        <taxon>Sordariomycetes</taxon>
        <taxon>Sordariomycetidae</taxon>
        <taxon>Magnaporthales</taxon>
        <taxon>Pyriculariaceae</taxon>
        <taxon>Pyricularia</taxon>
    </lineage>
</organism>
<name>MSH3_PYRO7</name>
<protein>
    <recommendedName>
        <fullName>DNA mismatch repair protein MSH3</fullName>
    </recommendedName>
    <alternativeName>
        <fullName>MutS protein homolog 3</fullName>
    </alternativeName>
</protein>
<dbReference type="EMBL" id="CM001231">
    <property type="protein sequence ID" value="EHA57344.1"/>
    <property type="molecule type" value="Genomic_DNA"/>
</dbReference>
<dbReference type="RefSeq" id="XP_003709956.1">
    <property type="nucleotide sequence ID" value="XM_003709908.1"/>
</dbReference>
<dbReference type="SMR" id="A4R0R0"/>
<dbReference type="FunCoup" id="A4R0R0">
    <property type="interactions" value="756"/>
</dbReference>
<dbReference type="STRING" id="242507.A4R0R0"/>
<dbReference type="EnsemblFungi" id="MGG_09306T0">
    <property type="protein sequence ID" value="MGG_09306T0"/>
    <property type="gene ID" value="MGG_09306"/>
</dbReference>
<dbReference type="GeneID" id="2680221"/>
<dbReference type="KEGG" id="mgr:MGG_09306"/>
<dbReference type="VEuPathDB" id="FungiDB:MGG_09306"/>
<dbReference type="eggNOG" id="KOG0218">
    <property type="taxonomic scope" value="Eukaryota"/>
</dbReference>
<dbReference type="HOGENOM" id="CLU_002472_0_0_1"/>
<dbReference type="InParanoid" id="A4R0R0"/>
<dbReference type="OMA" id="INMHAAR"/>
<dbReference type="OrthoDB" id="121051at2759"/>
<dbReference type="Proteomes" id="UP000009058">
    <property type="component" value="Chromosome 1"/>
</dbReference>
<dbReference type="GO" id="GO:0005634">
    <property type="term" value="C:nucleus"/>
    <property type="evidence" value="ECO:0007669"/>
    <property type="project" value="UniProtKB-SubCell"/>
</dbReference>
<dbReference type="GO" id="GO:0005524">
    <property type="term" value="F:ATP binding"/>
    <property type="evidence" value="ECO:0007669"/>
    <property type="project" value="UniProtKB-KW"/>
</dbReference>
<dbReference type="GO" id="GO:0140664">
    <property type="term" value="F:ATP-dependent DNA damage sensor activity"/>
    <property type="evidence" value="ECO:0007669"/>
    <property type="project" value="InterPro"/>
</dbReference>
<dbReference type="GO" id="GO:0030983">
    <property type="term" value="F:mismatched DNA binding"/>
    <property type="evidence" value="ECO:0007669"/>
    <property type="project" value="InterPro"/>
</dbReference>
<dbReference type="GO" id="GO:0006298">
    <property type="term" value="P:mismatch repair"/>
    <property type="evidence" value="ECO:0007669"/>
    <property type="project" value="InterPro"/>
</dbReference>
<dbReference type="GO" id="GO:0006312">
    <property type="term" value="P:mitotic recombination"/>
    <property type="evidence" value="ECO:0007669"/>
    <property type="project" value="TreeGrafter"/>
</dbReference>
<dbReference type="FunFam" id="3.30.420.110:FF:000008">
    <property type="entry name" value="DNA mismatch repair protein"/>
    <property type="match status" value="1"/>
</dbReference>
<dbReference type="FunFam" id="3.40.1170.10:FF:000006">
    <property type="entry name" value="DNA mismatch repair protein"/>
    <property type="match status" value="1"/>
</dbReference>
<dbReference type="FunFam" id="1.10.1420.10:FF:000004">
    <property type="entry name" value="DNA mismatch repair protein Msh3"/>
    <property type="match status" value="1"/>
</dbReference>
<dbReference type="Gene3D" id="1.10.1420.10">
    <property type="match status" value="2"/>
</dbReference>
<dbReference type="Gene3D" id="3.40.1170.10">
    <property type="entry name" value="DNA repair protein MutS, domain I"/>
    <property type="match status" value="1"/>
</dbReference>
<dbReference type="Gene3D" id="3.30.420.110">
    <property type="entry name" value="MutS, connector domain"/>
    <property type="match status" value="1"/>
</dbReference>
<dbReference type="Gene3D" id="3.40.50.300">
    <property type="entry name" value="P-loop containing nucleotide triphosphate hydrolases"/>
    <property type="match status" value="1"/>
</dbReference>
<dbReference type="InterPro" id="IPR007695">
    <property type="entry name" value="DNA_mismatch_repair_MutS-lik_N"/>
</dbReference>
<dbReference type="InterPro" id="IPR017261">
    <property type="entry name" value="DNA_mismatch_repair_MutS/MSH"/>
</dbReference>
<dbReference type="InterPro" id="IPR000432">
    <property type="entry name" value="DNA_mismatch_repair_MutS_C"/>
</dbReference>
<dbReference type="InterPro" id="IPR007861">
    <property type="entry name" value="DNA_mismatch_repair_MutS_clamp"/>
</dbReference>
<dbReference type="InterPro" id="IPR007696">
    <property type="entry name" value="DNA_mismatch_repair_MutS_core"/>
</dbReference>
<dbReference type="InterPro" id="IPR016151">
    <property type="entry name" value="DNA_mismatch_repair_MutS_N"/>
</dbReference>
<dbReference type="InterPro" id="IPR036187">
    <property type="entry name" value="DNA_mismatch_repair_MutS_sf"/>
</dbReference>
<dbReference type="InterPro" id="IPR007860">
    <property type="entry name" value="DNA_mmatch_repair_MutS_con_dom"/>
</dbReference>
<dbReference type="InterPro" id="IPR045076">
    <property type="entry name" value="MutS"/>
</dbReference>
<dbReference type="InterPro" id="IPR036678">
    <property type="entry name" value="MutS_con_dom_sf"/>
</dbReference>
<dbReference type="InterPro" id="IPR027417">
    <property type="entry name" value="P-loop_NTPase"/>
</dbReference>
<dbReference type="NCBIfam" id="NF003810">
    <property type="entry name" value="PRK05399.1"/>
    <property type="match status" value="1"/>
</dbReference>
<dbReference type="PANTHER" id="PTHR11361:SF122">
    <property type="entry name" value="DNA MISMATCH REPAIR PROTEIN MSH3"/>
    <property type="match status" value="1"/>
</dbReference>
<dbReference type="PANTHER" id="PTHR11361">
    <property type="entry name" value="DNA MISMATCH REPAIR PROTEIN MUTS FAMILY MEMBER"/>
    <property type="match status" value="1"/>
</dbReference>
<dbReference type="Pfam" id="PF01624">
    <property type="entry name" value="MutS_I"/>
    <property type="match status" value="1"/>
</dbReference>
<dbReference type="Pfam" id="PF05188">
    <property type="entry name" value="MutS_II"/>
    <property type="match status" value="1"/>
</dbReference>
<dbReference type="Pfam" id="PF05192">
    <property type="entry name" value="MutS_III"/>
    <property type="match status" value="1"/>
</dbReference>
<dbReference type="Pfam" id="PF05190">
    <property type="entry name" value="MutS_IV"/>
    <property type="match status" value="1"/>
</dbReference>
<dbReference type="Pfam" id="PF00488">
    <property type="entry name" value="MutS_V"/>
    <property type="match status" value="1"/>
</dbReference>
<dbReference type="PIRSF" id="PIRSF037677">
    <property type="entry name" value="DNA_mis_repair_Msh6"/>
    <property type="match status" value="1"/>
</dbReference>
<dbReference type="SMART" id="SM00534">
    <property type="entry name" value="MUTSac"/>
    <property type="match status" value="1"/>
</dbReference>
<dbReference type="SMART" id="SM00533">
    <property type="entry name" value="MUTSd"/>
    <property type="match status" value="1"/>
</dbReference>
<dbReference type="SUPFAM" id="SSF55271">
    <property type="entry name" value="DNA repair protein MutS, domain I"/>
    <property type="match status" value="1"/>
</dbReference>
<dbReference type="SUPFAM" id="SSF48334">
    <property type="entry name" value="DNA repair protein MutS, domain III"/>
    <property type="match status" value="1"/>
</dbReference>
<dbReference type="SUPFAM" id="SSF52540">
    <property type="entry name" value="P-loop containing nucleoside triphosphate hydrolases"/>
    <property type="match status" value="1"/>
</dbReference>
<dbReference type="PROSITE" id="PS00486">
    <property type="entry name" value="DNA_MISMATCH_REPAIR_2"/>
    <property type="match status" value="1"/>
</dbReference>
<evidence type="ECO:0000250" key="1"/>
<evidence type="ECO:0000255" key="2"/>
<evidence type="ECO:0000256" key="3">
    <source>
        <dbReference type="SAM" id="MobiDB-lite"/>
    </source>
</evidence>
<evidence type="ECO:0000305" key="4"/>
<reference key="1">
    <citation type="journal article" date="2005" name="Nature">
        <title>The genome sequence of the rice blast fungus Magnaporthe grisea.</title>
        <authorList>
            <person name="Dean R.A."/>
            <person name="Talbot N.J."/>
            <person name="Ebbole D.J."/>
            <person name="Farman M.L."/>
            <person name="Mitchell T.K."/>
            <person name="Orbach M.J."/>
            <person name="Thon M.R."/>
            <person name="Kulkarni R."/>
            <person name="Xu J.-R."/>
            <person name="Pan H."/>
            <person name="Read N.D."/>
            <person name="Lee Y.-H."/>
            <person name="Carbone I."/>
            <person name="Brown D."/>
            <person name="Oh Y.Y."/>
            <person name="Donofrio N."/>
            <person name="Jeong J.S."/>
            <person name="Soanes D.M."/>
            <person name="Djonovic S."/>
            <person name="Kolomiets E."/>
            <person name="Rehmeyer C."/>
            <person name="Li W."/>
            <person name="Harding M."/>
            <person name="Kim S."/>
            <person name="Lebrun M.-H."/>
            <person name="Bohnert H."/>
            <person name="Coughlan S."/>
            <person name="Butler J."/>
            <person name="Calvo S.E."/>
            <person name="Ma L.-J."/>
            <person name="Nicol R."/>
            <person name="Purcell S."/>
            <person name="Nusbaum C."/>
            <person name="Galagan J.E."/>
            <person name="Birren B.W."/>
        </authorList>
    </citation>
    <scope>NUCLEOTIDE SEQUENCE [LARGE SCALE GENOMIC DNA]</scope>
    <source>
        <strain>70-15 / ATCC MYA-4617 / FGSC 8958</strain>
    </source>
</reference>
<accession>A4R0R0</accession>
<accession>G4MQQ7</accession>
<gene>
    <name type="primary">MSH3</name>
    <name type="ORF">MGG_09306</name>
</gene>
<comment type="function">
    <text evidence="1">Component of the post-replicative DNA mismatch repair system (MMR). Heterodimerizes with MSH2 to form MutS beta, which binds to DNA mismatches thereby initiating DNA repair. MSH3 provides substrate-binding and substrate specificity to the complex. When bound, the MutS beta heterodimer bends the DNA helix and shields approximately 20 base pairs. Acts mainly to repair insertion-deletion loops (IDLs) from 2 to 13 nucleotides in size, but can also repair base-base and single insertion-deletion mismatches that occur during replication. After mismatch binding, forms a ternary complex with the MutL alpha heterodimer, which is thought to be responsible for directing the downstream MMR events, including strand discrimination, excision, and resynthesis. ATP binding and hydrolysis play a pivotal role in mismatch repair functions (By similarity).</text>
</comment>
<comment type="subunit">
    <text evidence="1">Heterodimer consisting of MSH2-MSH3 (MutS beta). Forms a ternary complex with MutL alpha (MLH1-PMS1) (By similarity).</text>
</comment>
<comment type="subcellular location">
    <subcellularLocation>
        <location evidence="1">Nucleus</location>
    </subcellularLocation>
</comment>
<comment type="similarity">
    <text evidence="4">Belongs to the DNA mismatch repair MutS family. MSH3 subfamily.</text>
</comment>
<proteinExistence type="inferred from homology"/>
<feature type="chain" id="PRO_0000338524" description="DNA mismatch repair protein MSH3">
    <location>
        <begin position="1"/>
        <end position="1151"/>
    </location>
</feature>
<feature type="region of interest" description="Disordered" evidence="3">
    <location>
        <begin position="1"/>
        <end position="156"/>
    </location>
</feature>
<feature type="region of interest" description="Disordered" evidence="3">
    <location>
        <begin position="173"/>
        <end position="224"/>
    </location>
</feature>
<feature type="region of interest" description="Mispair-binding domain" evidence="1">
    <location>
        <begin position="223"/>
        <end position="347"/>
    </location>
</feature>
<feature type="compositionally biased region" description="Basic residues" evidence="3">
    <location>
        <begin position="71"/>
        <end position="80"/>
    </location>
</feature>
<feature type="compositionally biased region" description="Acidic residues" evidence="3">
    <location>
        <begin position="84"/>
        <end position="110"/>
    </location>
</feature>
<feature type="compositionally biased region" description="Low complexity" evidence="3">
    <location>
        <begin position="111"/>
        <end position="131"/>
    </location>
</feature>
<feature type="compositionally biased region" description="Basic and acidic residues" evidence="3">
    <location>
        <begin position="137"/>
        <end position="151"/>
    </location>
</feature>
<feature type="compositionally biased region" description="Acidic residues" evidence="3">
    <location>
        <begin position="196"/>
        <end position="210"/>
    </location>
</feature>
<feature type="binding site" evidence="2">
    <location>
        <begin position="913"/>
        <end position="920"/>
    </location>
    <ligand>
        <name>ATP</name>
        <dbReference type="ChEBI" id="CHEBI:30616"/>
    </ligand>
</feature>